<proteinExistence type="evidence at transcript level"/>
<dbReference type="EMBL" id="AF334814">
    <property type="protein sequence ID" value="AAK25747.2"/>
    <property type="molecule type" value="mRNA"/>
</dbReference>
<dbReference type="EMBL" id="AY519633">
    <property type="protein sequence ID" value="AAS10103.1"/>
    <property type="molecule type" value="mRNA"/>
</dbReference>
<dbReference type="EMBL" id="AB006702">
    <property type="protein sequence ID" value="BAB11591.1"/>
    <property type="status" value="ALT_INIT"/>
    <property type="molecule type" value="Genomic_DNA"/>
</dbReference>
<dbReference type="EMBL" id="CP002688">
    <property type="protein sequence ID" value="AED94537.1"/>
    <property type="molecule type" value="Genomic_DNA"/>
</dbReference>
<dbReference type="EMBL" id="DQ447019">
    <property type="protein sequence ID" value="ABE66206.1"/>
    <property type="molecule type" value="mRNA"/>
</dbReference>
<dbReference type="EMBL" id="DQ653331">
    <property type="protein sequence ID" value="ABK28730.1"/>
    <property type="status" value="ALT_SEQ"/>
    <property type="molecule type" value="mRNA"/>
</dbReference>
<dbReference type="RefSeq" id="NP_568581.1">
    <property type="nucleotide sequence ID" value="NM_123400.2"/>
</dbReference>
<dbReference type="SMR" id="Q1PDP9"/>
<dbReference type="STRING" id="3702.Q1PDP9"/>
<dbReference type="PaxDb" id="3702-AT5G40360.1"/>
<dbReference type="EnsemblPlants" id="AT5G40360.1">
    <property type="protein sequence ID" value="AT5G40360.1"/>
    <property type="gene ID" value="AT5G40360"/>
</dbReference>
<dbReference type="GeneID" id="834034"/>
<dbReference type="Gramene" id="AT5G40360.1">
    <property type="protein sequence ID" value="AT5G40360.1"/>
    <property type="gene ID" value="AT5G40360"/>
</dbReference>
<dbReference type="KEGG" id="ath:AT5G40360"/>
<dbReference type="Araport" id="AT5G40360"/>
<dbReference type="TAIR" id="AT5G40360">
    <property type="gene designation" value="MYB115"/>
</dbReference>
<dbReference type="eggNOG" id="KOG0048">
    <property type="taxonomic scope" value="Eukaryota"/>
</dbReference>
<dbReference type="HOGENOM" id="CLU_856178_0_0_1"/>
<dbReference type="InParanoid" id="Q1PDP9"/>
<dbReference type="OMA" id="IGCHEPV"/>
<dbReference type="PhylomeDB" id="Q1PDP9"/>
<dbReference type="PRO" id="PR:Q1PDP9"/>
<dbReference type="Proteomes" id="UP000006548">
    <property type="component" value="Chromosome 5"/>
</dbReference>
<dbReference type="ExpressionAtlas" id="Q1PDP9">
    <property type="expression patterns" value="baseline and differential"/>
</dbReference>
<dbReference type="GO" id="GO:0005634">
    <property type="term" value="C:nucleus"/>
    <property type="evidence" value="ECO:0000314"/>
    <property type="project" value="UniProtKB"/>
</dbReference>
<dbReference type="GO" id="GO:0003677">
    <property type="term" value="F:DNA binding"/>
    <property type="evidence" value="ECO:0000314"/>
    <property type="project" value="TAIR"/>
</dbReference>
<dbReference type="GO" id="GO:0003700">
    <property type="term" value="F:DNA-binding transcription factor activity"/>
    <property type="evidence" value="ECO:0000314"/>
    <property type="project" value="UniProtKB"/>
</dbReference>
<dbReference type="GO" id="GO:0043565">
    <property type="term" value="F:sequence-specific DNA binding"/>
    <property type="evidence" value="ECO:0000353"/>
    <property type="project" value="TAIR"/>
</dbReference>
<dbReference type="GO" id="GO:0009960">
    <property type="term" value="P:endosperm development"/>
    <property type="evidence" value="ECO:0000316"/>
    <property type="project" value="TAIR"/>
</dbReference>
<dbReference type="GO" id="GO:0055089">
    <property type="term" value="P:fatty acid homeostasis"/>
    <property type="evidence" value="ECO:0000315"/>
    <property type="project" value="UniProtKB"/>
</dbReference>
<dbReference type="GO" id="GO:0045893">
    <property type="term" value="P:positive regulation of DNA-templated transcription"/>
    <property type="evidence" value="ECO:0000314"/>
    <property type="project" value="UniProtKB"/>
</dbReference>
<dbReference type="GO" id="GO:0045723">
    <property type="term" value="P:positive regulation of fatty acid biosynthetic process"/>
    <property type="evidence" value="ECO:0000316"/>
    <property type="project" value="TAIR"/>
</dbReference>
<dbReference type="GO" id="GO:2001280">
    <property type="term" value="P:positive regulation of unsaturated fatty acid biosynthetic process"/>
    <property type="evidence" value="ECO:0000315"/>
    <property type="project" value="UniProtKB"/>
</dbReference>
<dbReference type="GO" id="GO:0006355">
    <property type="term" value="P:regulation of DNA-templated transcription"/>
    <property type="evidence" value="ECO:0000304"/>
    <property type="project" value="TAIR"/>
</dbReference>
<dbReference type="GO" id="GO:2000014">
    <property type="term" value="P:regulation of endosperm development"/>
    <property type="evidence" value="ECO:0000315"/>
    <property type="project" value="UniProtKB"/>
</dbReference>
<dbReference type="GO" id="GO:0010439">
    <property type="term" value="P:regulation of glucosinolate biosynthetic process"/>
    <property type="evidence" value="ECO:0000316"/>
    <property type="project" value="TAIR"/>
</dbReference>
<dbReference type="GO" id="GO:0010262">
    <property type="term" value="P:somatic embryogenesis"/>
    <property type="evidence" value="ECO:0000315"/>
    <property type="project" value="UniProtKB"/>
</dbReference>
<dbReference type="GO" id="GO:0010228">
    <property type="term" value="P:vegetative to reproductive phase transition of meristem"/>
    <property type="evidence" value="ECO:0000315"/>
    <property type="project" value="UniProtKB"/>
</dbReference>
<dbReference type="CDD" id="cd00167">
    <property type="entry name" value="SANT"/>
    <property type="match status" value="2"/>
</dbReference>
<dbReference type="FunFam" id="1.10.10.60:FF:000381">
    <property type="entry name" value="Transcription factor MYB119"/>
    <property type="match status" value="1"/>
</dbReference>
<dbReference type="FunFam" id="1.10.10.60:FF:000010">
    <property type="entry name" value="Transcriptional activator Myb isoform A"/>
    <property type="match status" value="1"/>
</dbReference>
<dbReference type="Gene3D" id="1.10.10.60">
    <property type="entry name" value="Homeodomain-like"/>
    <property type="match status" value="2"/>
</dbReference>
<dbReference type="InterPro" id="IPR009057">
    <property type="entry name" value="Homeodomain-like_sf"/>
</dbReference>
<dbReference type="InterPro" id="IPR017930">
    <property type="entry name" value="Myb_dom"/>
</dbReference>
<dbReference type="InterPro" id="IPR050560">
    <property type="entry name" value="MYB_TF"/>
</dbReference>
<dbReference type="InterPro" id="IPR001005">
    <property type="entry name" value="SANT/Myb"/>
</dbReference>
<dbReference type="PANTHER" id="PTHR45614:SF273">
    <property type="entry name" value="MYB DOMAIN PROTEIN 100-RELATED"/>
    <property type="match status" value="1"/>
</dbReference>
<dbReference type="PANTHER" id="PTHR45614">
    <property type="entry name" value="MYB PROTEIN-RELATED"/>
    <property type="match status" value="1"/>
</dbReference>
<dbReference type="Pfam" id="PF13921">
    <property type="entry name" value="Myb_DNA-bind_6"/>
    <property type="match status" value="1"/>
</dbReference>
<dbReference type="SMART" id="SM00717">
    <property type="entry name" value="SANT"/>
    <property type="match status" value="2"/>
</dbReference>
<dbReference type="SUPFAM" id="SSF46689">
    <property type="entry name" value="Homeodomain-like"/>
    <property type="match status" value="1"/>
</dbReference>
<dbReference type="PROSITE" id="PS51294">
    <property type="entry name" value="HTH_MYB"/>
    <property type="match status" value="2"/>
</dbReference>
<comment type="function">
    <text evidence="3 4">Transcription activator that recognizes the motif 5'-TAACGG-3' in the promoter of target genes (PubMed:27681170). Promotes vegetative-to-embryonic transition and the formation of somatic embryos from root explants in a WUS-independent manner (PubMed:18695688). Together with MYB118, activates the transcription of S-ACP-DES2/AAD2 and S-ACP-DES3/AAD3 thus promoting the biosynthesis of omega-7 monounsaturated fatty acid in seed endosperm (PubMed:27681170).</text>
</comment>
<comment type="subcellular location">
    <subcellularLocation>
        <location evidence="1 4">Nucleus</location>
    </subcellularLocation>
</comment>
<comment type="tissue specificity">
    <text evidence="3 4">Accumulates in reproductive organs (e.g. flowers and siliques) (PubMed:18695688, PubMed:27681170). Expressed at very low levels in vegetative organs (PubMed:27681170).</text>
</comment>
<comment type="developmental stage">
    <text evidence="4">Induced at the onset of the maturation phase in the endosperm at low levels in a heterogeneous repartition, particularly in the chalazal endosperm. Also detected in pollen grains.</text>
</comment>
<comment type="induction">
    <text evidence="4">Induced by LEC2 but repressed by MYB118.</text>
</comment>
<comment type="disruption phenotype">
    <text evidence="3 4">Single and myb118 myb115 double mutants do not show apparent developmental abnormalities (PubMed:18695688). The endosperm oil of double mutant myb115 myb118 lacks omega-7 fatty acids (PubMed:27681170).</text>
</comment>
<comment type="sequence caution" evidence="6">
    <conflict type="erroneous termination">
        <sequence resource="EMBL-CDS" id="ABK28730"/>
    </conflict>
    <text>Extended C-terminus.</text>
</comment>
<comment type="sequence caution" evidence="6">
    <conflict type="erroneous initiation">
        <sequence resource="EMBL-CDS" id="BAB11591"/>
    </conflict>
    <text>Truncated N-terminus.</text>
</comment>
<protein>
    <recommendedName>
        <fullName evidence="5">Transcription factor MYB115</fullName>
    </recommendedName>
    <alternativeName>
        <fullName evidence="5">Myb-related protein 115</fullName>
        <shortName evidence="5">AtMYB115</shortName>
    </alternativeName>
</protein>
<sequence length="359" mass="41600">MYHQNLISSTPNQNSNPHDWDIQNPLFSIHPSAEIPSKYPFMGITSCPNTNVFEEFQYKITNDQNFPTTYNTPFPVISEGISYNMHDVQENTMCGYTAHNQGLIIGCHEPVLVHAVVESQQFNVPQSEDINLVSQSERVTEDKVMFKTDHKKKDIIGKGQWTPTEDELLVRMVKSKGTKNWTSIAKMFQGRVGKQCRERWHNHLRPNIKKNDWSEEEDQILIEVHKIVGNKWTEIAKRLPGRSENIVKNHWNATKRRLHSVRTKRSDAFSPRNNALENYIRSITINNNALMNREVDSITANSEIDSTRCENIVDEVMNLNLHATTSVYVPEQAVLTWGYDFTKCYEPMDDTWMLMNGWN</sequence>
<evidence type="ECO:0000255" key="1">
    <source>
        <dbReference type="PROSITE-ProRule" id="PRU00625"/>
    </source>
</evidence>
<evidence type="ECO:0000256" key="2">
    <source>
        <dbReference type="SAM" id="MobiDB-lite"/>
    </source>
</evidence>
<evidence type="ECO:0000269" key="3">
    <source>
    </source>
</evidence>
<evidence type="ECO:0000269" key="4">
    <source>
    </source>
</evidence>
<evidence type="ECO:0000303" key="5">
    <source>
    </source>
</evidence>
<evidence type="ECO:0000305" key="6"/>
<evidence type="ECO:0000312" key="7">
    <source>
        <dbReference type="Araport" id="AT5G40360"/>
    </source>
</evidence>
<evidence type="ECO:0000312" key="8">
    <source>
        <dbReference type="EMBL" id="BAB11591.1"/>
    </source>
</evidence>
<reference key="1">
    <citation type="journal article" date="2001" name="Curr. Opin. Plant Biol.">
        <title>The R2R3-MYB gene family in Arabidopsis thaliana.</title>
        <authorList>
            <person name="Stracke R."/>
            <person name="Werber M."/>
            <person name="Weisshaar B."/>
        </authorList>
    </citation>
    <scope>NUCLEOTIDE SEQUENCE [MRNA]</scope>
    <scope>GENE FAMILY</scope>
    <scope>NOMENCLATURE</scope>
    <source>
        <strain>cv. Columbia</strain>
    </source>
</reference>
<reference key="2">
    <citation type="journal article" date="2006" name="Plant Mol. Biol.">
        <title>The MYB transcription factor superfamily of Arabidopsis: expression analysis and phylogenetic comparison with the rice MYB family.</title>
        <authorList>
            <person name="Chen Y."/>
            <person name="Yang X."/>
            <person name="He K."/>
            <person name="Liu M."/>
            <person name="Li J."/>
            <person name="Gao Z."/>
            <person name="Lin Z."/>
            <person name="Zhang Y."/>
            <person name="Wang X."/>
            <person name="Qiu X."/>
            <person name="Shen Y."/>
            <person name="Zhang L."/>
            <person name="Deng X."/>
            <person name="Luo J."/>
            <person name="Deng X.-W."/>
            <person name="Chen Z."/>
            <person name="Gu H."/>
            <person name="Qu L.-J."/>
        </authorList>
    </citation>
    <scope>NUCLEOTIDE SEQUENCE [MRNA]</scope>
    <scope>GENE FAMILY</scope>
    <scope>NOMENCLATURE</scope>
    <source>
        <strain>cv. Columbia</strain>
    </source>
</reference>
<reference key="3">
    <citation type="journal article" date="1997" name="DNA Res.">
        <title>Structural analysis of Arabidopsis thaliana chromosome 5. II. Sequence features of the regions of 1,044,062 bp covered by thirteen physically assigned P1 clones.</title>
        <authorList>
            <person name="Kotani H."/>
            <person name="Nakamura Y."/>
            <person name="Sato S."/>
            <person name="Kaneko T."/>
            <person name="Asamizu E."/>
            <person name="Miyajima N."/>
            <person name="Tabata S."/>
        </authorList>
    </citation>
    <scope>NUCLEOTIDE SEQUENCE [LARGE SCALE GENOMIC DNA]</scope>
    <source>
        <strain>cv. Columbia</strain>
    </source>
</reference>
<reference key="4">
    <citation type="journal article" date="2017" name="Plant J.">
        <title>Araport11: a complete reannotation of the Arabidopsis thaliana reference genome.</title>
        <authorList>
            <person name="Cheng C.Y."/>
            <person name="Krishnakumar V."/>
            <person name="Chan A.P."/>
            <person name="Thibaud-Nissen F."/>
            <person name="Schobel S."/>
            <person name="Town C.D."/>
        </authorList>
    </citation>
    <scope>GENOME REANNOTATION</scope>
    <source>
        <strain>cv. Columbia</strain>
    </source>
</reference>
<reference key="5">
    <citation type="journal article" date="2006" name="Plant Biotechnol. J.">
        <title>Simultaneous high-throughput recombinational cloning of open reading frames in closed and open configurations.</title>
        <authorList>
            <person name="Underwood B.A."/>
            <person name="Vanderhaeghen R."/>
            <person name="Whitford R."/>
            <person name="Town C.D."/>
            <person name="Hilson P."/>
        </authorList>
    </citation>
    <scope>NUCLEOTIDE SEQUENCE [LARGE SCALE MRNA]</scope>
    <source>
        <strain>cv. Columbia</strain>
    </source>
</reference>
<reference key="6">
    <citation type="journal article" date="2009" name="Cell Res.">
        <title>Overexpression of PGA37/MYB118 and MYB115 promotes vegetative-to-embryonic transition in Arabidopsis.</title>
        <authorList>
            <person name="Wang X."/>
            <person name="Niu Q.-W."/>
            <person name="Teng C."/>
            <person name="Li C."/>
            <person name="Mu J."/>
            <person name="Chua N.-H."/>
            <person name="Zuo J."/>
        </authorList>
    </citation>
    <scope>FUNCTION</scope>
    <scope>DISRUPTION PHENOTYPE</scope>
    <scope>TISSUE SPECIFICITY</scope>
    <source>
        <strain>cv. Columbia</strain>
        <strain>cv. Landsberg erecta</strain>
        <strain>cv. Wassilewskija</strain>
    </source>
</reference>
<reference key="7">
    <citation type="journal article" date="2016" name="Plant Cell">
        <title>Transcriptional activation of two palmitoyl-ACP delta9 desaturase genes by MYB115 and MYB118 is critical for biosynthesis of omega-7 monounsaturated fatty acid in the endosperm of Arabidopsis seeds.</title>
        <authorList>
            <person name="Troncoso-Ponce M.A."/>
            <person name="Barthole G."/>
            <person name="Tremblais G."/>
            <person name="To A."/>
            <person name="Miquel M."/>
            <person name="Lepiniec L."/>
            <person name="Baud S."/>
        </authorList>
    </citation>
    <scope>FUNCTION</scope>
    <scope>DEVELOPMENTAL STAGE</scope>
    <scope>DISRUPTION PHENOTYPE</scope>
    <scope>TISSUE SPECIFICITY</scope>
    <scope>INDUCTION BY LEC2</scope>
    <scope>SUBCELLULAR LOCATION</scope>
    <source>
        <strain>cv. Columbia</strain>
    </source>
</reference>
<keyword id="KW-0010">Activator</keyword>
<keyword id="KW-0238">DNA-binding</keyword>
<keyword id="KW-0539">Nucleus</keyword>
<keyword id="KW-1185">Reference proteome</keyword>
<keyword id="KW-0677">Repeat</keyword>
<keyword id="KW-0804">Transcription</keyword>
<keyword id="KW-0805">Transcription regulation</keyword>
<organism>
    <name type="scientific">Arabidopsis thaliana</name>
    <name type="common">Mouse-ear cress</name>
    <dbReference type="NCBI Taxonomy" id="3702"/>
    <lineage>
        <taxon>Eukaryota</taxon>
        <taxon>Viridiplantae</taxon>
        <taxon>Streptophyta</taxon>
        <taxon>Embryophyta</taxon>
        <taxon>Tracheophyta</taxon>
        <taxon>Spermatophyta</taxon>
        <taxon>Magnoliopsida</taxon>
        <taxon>eudicotyledons</taxon>
        <taxon>Gunneridae</taxon>
        <taxon>Pentapetalae</taxon>
        <taxon>rosids</taxon>
        <taxon>malvids</taxon>
        <taxon>Brassicales</taxon>
        <taxon>Brassicaceae</taxon>
        <taxon>Camelineae</taxon>
        <taxon>Arabidopsis</taxon>
    </lineage>
</organism>
<name>MY115_ARATH</name>
<feature type="chain" id="PRO_0000438620" description="Transcription factor MYB115">
    <location>
        <begin position="1"/>
        <end position="359"/>
    </location>
</feature>
<feature type="domain" description="HTH myb-type 1" evidence="1">
    <location>
        <begin position="153"/>
        <end position="208"/>
    </location>
</feature>
<feature type="domain" description="HTH myb-type 2" evidence="1">
    <location>
        <begin position="209"/>
        <end position="259"/>
    </location>
</feature>
<feature type="DNA-binding region" description="H-T-H motif" evidence="1">
    <location>
        <begin position="181"/>
        <end position="204"/>
    </location>
</feature>
<feature type="DNA-binding region" description="H-T-H motif" evidence="1">
    <location>
        <begin position="232"/>
        <end position="255"/>
    </location>
</feature>
<feature type="region of interest" description="Disordered" evidence="2">
    <location>
        <begin position="1"/>
        <end position="21"/>
    </location>
</feature>
<feature type="compositionally biased region" description="Polar residues" evidence="2">
    <location>
        <begin position="1"/>
        <end position="17"/>
    </location>
</feature>
<feature type="sequence conflict" description="In Ref. 1; AAK25747." evidence="6" ref="1">
    <original>V</original>
    <variation>A</variation>
    <location>
        <position position="124"/>
    </location>
</feature>
<feature type="sequence conflict" description="In Ref. 2; AAS10103." evidence="6" ref="2">
    <original>H</original>
    <variation>R</variation>
    <location>
        <position position="201"/>
    </location>
</feature>
<feature type="sequence conflict" description="In Ref. 1; AAK25747." evidence="6" ref="1">
    <original>I</original>
    <variation>V</variation>
    <location>
        <position position="312"/>
    </location>
</feature>
<accession>Q1PDP9</accession>
<accession>A0MFK5</accession>
<accession>Q6R048</accession>
<accession>Q9C5Q0</accession>
<accession>Q9FNE3</accession>
<gene>
    <name evidence="5" type="primary">MYB115</name>
    <name evidence="7" type="ordered locus">At5g40360</name>
    <name evidence="8" type="ORF">MPO12.8</name>
</gene>